<accession>Q06R80</accession>
<reference key="1">
    <citation type="journal article" date="2007" name="Mol. Biol. Evol.">
        <title>Gene relocations within chloroplast genomes of Jasminum and Menodora (Oleaceae) are due to multiple, overlapping inversions.</title>
        <authorList>
            <person name="Lee H.-L."/>
            <person name="Jansen R.K."/>
            <person name="Chumley T.W."/>
            <person name="Kim K.-J."/>
        </authorList>
    </citation>
    <scope>NUCLEOTIDE SEQUENCE [LARGE SCALE GENOMIC DNA]</scope>
</reference>
<feature type="chain" id="PRO_0000275912" description="NAD(P)H-quinone oxidoreductase chain 4, chloroplastic">
    <location>
        <begin position="1"/>
        <end position="500"/>
    </location>
</feature>
<feature type="transmembrane region" description="Helical" evidence="1">
    <location>
        <begin position="4"/>
        <end position="24"/>
    </location>
</feature>
<feature type="transmembrane region" description="Helical" evidence="1">
    <location>
        <begin position="31"/>
        <end position="51"/>
    </location>
</feature>
<feature type="transmembrane region" description="Helical" evidence="1">
    <location>
        <begin position="84"/>
        <end position="104"/>
    </location>
</feature>
<feature type="transmembrane region" description="Helical" evidence="1">
    <location>
        <begin position="111"/>
        <end position="131"/>
    </location>
</feature>
<feature type="transmembrane region" description="Helical" evidence="1">
    <location>
        <begin position="134"/>
        <end position="154"/>
    </location>
</feature>
<feature type="transmembrane region" description="Helical" evidence="1">
    <location>
        <begin position="167"/>
        <end position="187"/>
    </location>
</feature>
<feature type="transmembrane region" description="Helical" evidence="1">
    <location>
        <begin position="212"/>
        <end position="232"/>
    </location>
</feature>
<feature type="transmembrane region" description="Helical" evidence="1">
    <location>
        <begin position="242"/>
        <end position="262"/>
    </location>
</feature>
<feature type="transmembrane region" description="Helical" evidence="1">
    <location>
        <begin position="272"/>
        <end position="292"/>
    </location>
</feature>
<feature type="transmembrane region" description="Helical" evidence="1">
    <location>
        <begin position="308"/>
        <end position="328"/>
    </location>
</feature>
<feature type="transmembrane region" description="Helical" evidence="1">
    <location>
        <begin position="330"/>
        <end position="350"/>
    </location>
</feature>
<feature type="transmembrane region" description="Helical" evidence="1">
    <location>
        <begin position="386"/>
        <end position="406"/>
    </location>
</feature>
<feature type="transmembrane region" description="Helical" evidence="1">
    <location>
        <begin position="411"/>
        <end position="431"/>
    </location>
</feature>
<feature type="transmembrane region" description="Helical" evidence="1">
    <location>
        <begin position="462"/>
        <end position="482"/>
    </location>
</feature>
<evidence type="ECO:0000255" key="1">
    <source>
        <dbReference type="HAMAP-Rule" id="MF_00491"/>
    </source>
</evidence>
<comment type="catalytic activity">
    <reaction evidence="1">
        <text>a plastoquinone + NADH + (n+1) H(+)(in) = a plastoquinol + NAD(+) + n H(+)(out)</text>
        <dbReference type="Rhea" id="RHEA:42608"/>
        <dbReference type="Rhea" id="RHEA-COMP:9561"/>
        <dbReference type="Rhea" id="RHEA-COMP:9562"/>
        <dbReference type="ChEBI" id="CHEBI:15378"/>
        <dbReference type="ChEBI" id="CHEBI:17757"/>
        <dbReference type="ChEBI" id="CHEBI:57540"/>
        <dbReference type="ChEBI" id="CHEBI:57945"/>
        <dbReference type="ChEBI" id="CHEBI:62192"/>
    </reaction>
</comment>
<comment type="catalytic activity">
    <reaction evidence="1">
        <text>a plastoquinone + NADPH + (n+1) H(+)(in) = a plastoquinol + NADP(+) + n H(+)(out)</text>
        <dbReference type="Rhea" id="RHEA:42612"/>
        <dbReference type="Rhea" id="RHEA-COMP:9561"/>
        <dbReference type="Rhea" id="RHEA-COMP:9562"/>
        <dbReference type="ChEBI" id="CHEBI:15378"/>
        <dbReference type="ChEBI" id="CHEBI:17757"/>
        <dbReference type="ChEBI" id="CHEBI:57783"/>
        <dbReference type="ChEBI" id="CHEBI:58349"/>
        <dbReference type="ChEBI" id="CHEBI:62192"/>
    </reaction>
</comment>
<comment type="subcellular location">
    <subcellularLocation>
        <location evidence="1">Plastid</location>
        <location evidence="1">Chloroplast thylakoid membrane</location>
        <topology evidence="1">Multi-pass membrane protein</topology>
    </subcellularLocation>
</comment>
<comment type="similarity">
    <text evidence="1">Belongs to the complex I subunit 4 family.</text>
</comment>
<proteinExistence type="inferred from homology"/>
<sequence>MNHFPWLTIIVVLPIFAGSLIFFLPHRGNRVIFWYTICISILELLLTTYAFCYHFQSDDPLIQLVEDYKWIDFFDFHWRLGIDGLSIGPILLTGFITTLATLAARPVTRDARLFHFLMLVMYSGQIGLFSCRDLLLFFLMWEFELIPVYLLLSMWGGKKRLYSATKFILYTAGGSVFLLMGALGIGLYGSNEPTFNLEILANQSYPVALERIFYIGFFIAFAVKLPIIPLHTWLPDTHGEAHYSTCMLLAGILLKMGAYGLVRINMELLSHAHSLFSPWLMIVGAMQIIYAASTSLGQRNLKKRIAYSSVSHMGFLIIGIGSITDIGLDGALLQIISHGFIGAALFFLAGTTYDRIRLVYLDEMGGIAIPMPKIFTMFSIFSMASLALPGMSGFVTEFIVFFGLITSPKYLLMAKILIPFVMAIGIILTPIYSLSMSRQMFYGYKIFNAPNSYFLDSGPRELFLSISIFLPILGIGLYPDFVLSLSVDKVEVILSNSFDR</sequence>
<organism>
    <name type="scientific">Jasminum nudiflorum</name>
    <name type="common">Winter jasmine</name>
    <dbReference type="NCBI Taxonomy" id="126431"/>
    <lineage>
        <taxon>Eukaryota</taxon>
        <taxon>Viridiplantae</taxon>
        <taxon>Streptophyta</taxon>
        <taxon>Embryophyta</taxon>
        <taxon>Tracheophyta</taxon>
        <taxon>Spermatophyta</taxon>
        <taxon>Magnoliopsida</taxon>
        <taxon>eudicotyledons</taxon>
        <taxon>Gunneridae</taxon>
        <taxon>Pentapetalae</taxon>
        <taxon>asterids</taxon>
        <taxon>lamiids</taxon>
        <taxon>Lamiales</taxon>
        <taxon>Oleaceae</taxon>
        <taxon>Jasmineae</taxon>
        <taxon>Jasminum</taxon>
    </lineage>
</organism>
<keyword id="KW-0150">Chloroplast</keyword>
<keyword id="KW-0472">Membrane</keyword>
<keyword id="KW-0520">NAD</keyword>
<keyword id="KW-0521">NADP</keyword>
<keyword id="KW-0934">Plastid</keyword>
<keyword id="KW-0618">Plastoquinone</keyword>
<keyword id="KW-0874">Quinone</keyword>
<keyword id="KW-0793">Thylakoid</keyword>
<keyword id="KW-1278">Translocase</keyword>
<keyword id="KW-0812">Transmembrane</keyword>
<keyword id="KW-1133">Transmembrane helix</keyword>
<name>NU4C_JASNU</name>
<dbReference type="EC" id="7.1.1.-" evidence="1"/>
<dbReference type="EMBL" id="DQ673255">
    <property type="protein sequence ID" value="ABG74679.1"/>
    <property type="molecule type" value="Genomic_DNA"/>
</dbReference>
<dbReference type="RefSeq" id="YP_778541.1">
    <property type="nucleotide sequence ID" value="NC_008407.1"/>
</dbReference>
<dbReference type="SMR" id="Q06R80"/>
<dbReference type="GeneID" id="4319832"/>
<dbReference type="GO" id="GO:0009535">
    <property type="term" value="C:chloroplast thylakoid membrane"/>
    <property type="evidence" value="ECO:0007669"/>
    <property type="project" value="UniProtKB-SubCell"/>
</dbReference>
<dbReference type="GO" id="GO:0008137">
    <property type="term" value="F:NADH dehydrogenase (ubiquinone) activity"/>
    <property type="evidence" value="ECO:0007669"/>
    <property type="project" value="InterPro"/>
</dbReference>
<dbReference type="GO" id="GO:0048039">
    <property type="term" value="F:ubiquinone binding"/>
    <property type="evidence" value="ECO:0007669"/>
    <property type="project" value="TreeGrafter"/>
</dbReference>
<dbReference type="GO" id="GO:0042773">
    <property type="term" value="P:ATP synthesis coupled electron transport"/>
    <property type="evidence" value="ECO:0007669"/>
    <property type="project" value="InterPro"/>
</dbReference>
<dbReference type="GO" id="GO:0015990">
    <property type="term" value="P:electron transport coupled proton transport"/>
    <property type="evidence" value="ECO:0007669"/>
    <property type="project" value="TreeGrafter"/>
</dbReference>
<dbReference type="HAMAP" id="MF_00491">
    <property type="entry name" value="NDH1_NuoM"/>
    <property type="match status" value="1"/>
</dbReference>
<dbReference type="InterPro" id="IPR022997">
    <property type="entry name" value="NADH_Q_OxRdtase_chain4"/>
</dbReference>
<dbReference type="InterPro" id="IPR010227">
    <property type="entry name" value="NADH_Q_OxRdtase_chainM/4"/>
</dbReference>
<dbReference type="InterPro" id="IPR003918">
    <property type="entry name" value="NADH_UbQ_OxRdtase"/>
</dbReference>
<dbReference type="InterPro" id="IPR001750">
    <property type="entry name" value="ND/Mrp_TM"/>
</dbReference>
<dbReference type="NCBIfam" id="TIGR01972">
    <property type="entry name" value="NDH_I_M"/>
    <property type="match status" value="1"/>
</dbReference>
<dbReference type="PANTHER" id="PTHR43507:SF21">
    <property type="entry name" value="NAD(P)H-QUINONE OXIDOREDUCTASE CHAIN 4, CHLOROPLASTIC"/>
    <property type="match status" value="1"/>
</dbReference>
<dbReference type="PANTHER" id="PTHR43507">
    <property type="entry name" value="NADH-UBIQUINONE OXIDOREDUCTASE CHAIN 4"/>
    <property type="match status" value="1"/>
</dbReference>
<dbReference type="Pfam" id="PF00361">
    <property type="entry name" value="Proton_antipo_M"/>
    <property type="match status" value="1"/>
</dbReference>
<dbReference type="PRINTS" id="PR01437">
    <property type="entry name" value="NUOXDRDTASE4"/>
</dbReference>
<protein>
    <recommendedName>
        <fullName evidence="1">NAD(P)H-quinone oxidoreductase chain 4, chloroplastic</fullName>
        <ecNumber evidence="1">7.1.1.-</ecNumber>
    </recommendedName>
    <alternativeName>
        <fullName evidence="1">NAD(P)H dehydrogenase, chain 4</fullName>
    </alternativeName>
    <alternativeName>
        <fullName evidence="1">NADH-plastoquinone oxidoreductase chain 4</fullName>
    </alternativeName>
</protein>
<geneLocation type="chloroplast"/>
<gene>
    <name evidence="1" type="primary">ndhD</name>
    <name type="ORF">JNC1274</name>
</gene>